<name>RIMM_PSYIN</name>
<accession>A1SZY7</accession>
<protein>
    <recommendedName>
        <fullName evidence="1">Ribosome maturation factor RimM</fullName>
    </recommendedName>
</protein>
<keyword id="KW-0143">Chaperone</keyword>
<keyword id="KW-0963">Cytoplasm</keyword>
<keyword id="KW-1185">Reference proteome</keyword>
<keyword id="KW-0690">Ribosome biogenesis</keyword>
<keyword id="KW-0698">rRNA processing</keyword>
<proteinExistence type="inferred from homology"/>
<evidence type="ECO:0000255" key="1">
    <source>
        <dbReference type="HAMAP-Rule" id="MF_00014"/>
    </source>
</evidence>
<dbReference type="EMBL" id="CP000510">
    <property type="protein sequence ID" value="ABM05052.1"/>
    <property type="molecule type" value="Genomic_DNA"/>
</dbReference>
<dbReference type="RefSeq" id="WP_011771604.1">
    <property type="nucleotide sequence ID" value="NC_008709.1"/>
</dbReference>
<dbReference type="SMR" id="A1SZY7"/>
<dbReference type="STRING" id="357804.Ping_3366"/>
<dbReference type="KEGG" id="pin:Ping_3366"/>
<dbReference type="eggNOG" id="COG0806">
    <property type="taxonomic scope" value="Bacteria"/>
</dbReference>
<dbReference type="HOGENOM" id="CLU_077636_1_0_6"/>
<dbReference type="OrthoDB" id="9783509at2"/>
<dbReference type="Proteomes" id="UP000000639">
    <property type="component" value="Chromosome"/>
</dbReference>
<dbReference type="GO" id="GO:0005737">
    <property type="term" value="C:cytoplasm"/>
    <property type="evidence" value="ECO:0007669"/>
    <property type="project" value="UniProtKB-SubCell"/>
</dbReference>
<dbReference type="GO" id="GO:0005840">
    <property type="term" value="C:ribosome"/>
    <property type="evidence" value="ECO:0007669"/>
    <property type="project" value="InterPro"/>
</dbReference>
<dbReference type="GO" id="GO:0043022">
    <property type="term" value="F:ribosome binding"/>
    <property type="evidence" value="ECO:0007669"/>
    <property type="project" value="InterPro"/>
</dbReference>
<dbReference type="GO" id="GO:0042274">
    <property type="term" value="P:ribosomal small subunit biogenesis"/>
    <property type="evidence" value="ECO:0007669"/>
    <property type="project" value="UniProtKB-UniRule"/>
</dbReference>
<dbReference type="GO" id="GO:0006364">
    <property type="term" value="P:rRNA processing"/>
    <property type="evidence" value="ECO:0007669"/>
    <property type="project" value="UniProtKB-UniRule"/>
</dbReference>
<dbReference type="Gene3D" id="2.30.30.240">
    <property type="entry name" value="PRC-barrel domain"/>
    <property type="match status" value="1"/>
</dbReference>
<dbReference type="Gene3D" id="2.40.30.60">
    <property type="entry name" value="RimM"/>
    <property type="match status" value="1"/>
</dbReference>
<dbReference type="HAMAP" id="MF_00014">
    <property type="entry name" value="Ribosome_mat_RimM"/>
    <property type="match status" value="1"/>
</dbReference>
<dbReference type="InterPro" id="IPR011033">
    <property type="entry name" value="PRC_barrel-like_sf"/>
</dbReference>
<dbReference type="InterPro" id="IPR056792">
    <property type="entry name" value="PRC_RimM"/>
</dbReference>
<dbReference type="InterPro" id="IPR011961">
    <property type="entry name" value="RimM"/>
</dbReference>
<dbReference type="InterPro" id="IPR002676">
    <property type="entry name" value="RimM_N"/>
</dbReference>
<dbReference type="InterPro" id="IPR036976">
    <property type="entry name" value="RimM_N_sf"/>
</dbReference>
<dbReference type="InterPro" id="IPR009000">
    <property type="entry name" value="Transl_B-barrel_sf"/>
</dbReference>
<dbReference type="NCBIfam" id="TIGR02273">
    <property type="entry name" value="16S_RimM"/>
    <property type="match status" value="1"/>
</dbReference>
<dbReference type="PANTHER" id="PTHR33692">
    <property type="entry name" value="RIBOSOME MATURATION FACTOR RIMM"/>
    <property type="match status" value="1"/>
</dbReference>
<dbReference type="PANTHER" id="PTHR33692:SF1">
    <property type="entry name" value="RIBOSOME MATURATION FACTOR RIMM"/>
    <property type="match status" value="1"/>
</dbReference>
<dbReference type="Pfam" id="PF24986">
    <property type="entry name" value="PRC_RimM"/>
    <property type="match status" value="1"/>
</dbReference>
<dbReference type="Pfam" id="PF01782">
    <property type="entry name" value="RimM"/>
    <property type="match status" value="1"/>
</dbReference>
<dbReference type="SUPFAM" id="SSF50346">
    <property type="entry name" value="PRC-barrel domain"/>
    <property type="match status" value="1"/>
</dbReference>
<dbReference type="SUPFAM" id="SSF50447">
    <property type="entry name" value="Translation proteins"/>
    <property type="match status" value="1"/>
</dbReference>
<reference key="1">
    <citation type="journal article" date="2008" name="BMC Genomics">
        <title>Genomics of an extreme psychrophile, Psychromonas ingrahamii.</title>
        <authorList>
            <person name="Riley M."/>
            <person name="Staley J.T."/>
            <person name="Danchin A."/>
            <person name="Wang T.Z."/>
            <person name="Brettin T.S."/>
            <person name="Hauser L.J."/>
            <person name="Land M.L."/>
            <person name="Thompson L.S."/>
        </authorList>
    </citation>
    <scope>NUCLEOTIDE SEQUENCE [LARGE SCALE GENOMIC DNA]</scope>
    <source>
        <strain>DSM 17664 / CCUG 51855 / 37</strain>
    </source>
</reference>
<sequence>MSKKAEPIVIGKFGAVHGIKGWLKVHSYTDDPESIFEYKPLLMKSKGQFQEVNIADWKRHSNGFVAKIVGFDVREEAQALVGLELLVDSDKLPNLEEDFYWRDLIGCQVKTDNGYDLGVVTEIMETGSNDVLVVKANSNDAFGQKERLIPFIDKQVISNVDITSKLIQVNWEPDF</sequence>
<feature type="chain" id="PRO_1000001221" description="Ribosome maturation factor RimM">
    <location>
        <begin position="1"/>
        <end position="175"/>
    </location>
</feature>
<feature type="domain" description="PRC barrel" evidence="1">
    <location>
        <begin position="96"/>
        <end position="175"/>
    </location>
</feature>
<comment type="function">
    <text evidence="1">An accessory protein needed during the final step in the assembly of 30S ribosomal subunit, possibly for assembly of the head region. Essential for efficient processing of 16S rRNA. May be needed both before and after RbfA during the maturation of 16S rRNA. It has affinity for free ribosomal 30S subunits but not for 70S ribosomes.</text>
</comment>
<comment type="subunit">
    <text evidence="1">Binds ribosomal protein uS19.</text>
</comment>
<comment type="subcellular location">
    <subcellularLocation>
        <location evidence="1">Cytoplasm</location>
    </subcellularLocation>
</comment>
<comment type="domain">
    <text evidence="1">The PRC barrel domain binds ribosomal protein uS19.</text>
</comment>
<comment type="similarity">
    <text evidence="1">Belongs to the RimM family.</text>
</comment>
<organism>
    <name type="scientific">Psychromonas ingrahamii (strain DSM 17664 / CCUG 51855 / 37)</name>
    <dbReference type="NCBI Taxonomy" id="357804"/>
    <lineage>
        <taxon>Bacteria</taxon>
        <taxon>Pseudomonadati</taxon>
        <taxon>Pseudomonadota</taxon>
        <taxon>Gammaproteobacteria</taxon>
        <taxon>Alteromonadales</taxon>
        <taxon>Psychromonadaceae</taxon>
        <taxon>Psychromonas</taxon>
    </lineage>
</organism>
<gene>
    <name evidence="1" type="primary">rimM</name>
    <name type="ordered locus">Ping_3366</name>
</gene>